<sequence>MSFASETKKELTNLEMKECCEKAELSALLRMNGSLSFSNRRLSIDIQTENAAIARRIYTLLKKGYDVTVELLVRKKMRLKKNNVYIVRLVEKSREILADLHIVRDDFSFIRNISQELIEKKCCKRSYLRGAFLAGGSVNNPETSSYHLEIFSLYKEHNDAICELMNGFDLNSKTLERRKGYITYLKEAEKITEFLNIIGAHNALLRFEDIRIVRDMRNSVNRLVNCETANLNKTIGAALRQIENIRYIDETVGLDILPDKLREIAQLRRDYQDVTLKELGEMVSGGKISKSGINHRLRKIDDIAEKLRAGETVAKK</sequence>
<proteinExistence type="inferred from homology"/>
<reference key="1">
    <citation type="journal article" date="2003" name="Nature">
        <title>The genome sequence of Bacillus anthracis Ames and comparison to closely related bacteria.</title>
        <authorList>
            <person name="Read T.D."/>
            <person name="Peterson S.N."/>
            <person name="Tourasse N.J."/>
            <person name="Baillie L.W."/>
            <person name="Paulsen I.T."/>
            <person name="Nelson K.E."/>
            <person name="Tettelin H."/>
            <person name="Fouts D.E."/>
            <person name="Eisen J.A."/>
            <person name="Gill S.R."/>
            <person name="Holtzapple E.K."/>
            <person name="Okstad O.A."/>
            <person name="Helgason E."/>
            <person name="Rilstone J."/>
            <person name="Wu M."/>
            <person name="Kolonay J.F."/>
            <person name="Beanan M.J."/>
            <person name="Dodson R.J."/>
            <person name="Brinkac L.M."/>
            <person name="Gwinn M.L."/>
            <person name="DeBoy R.T."/>
            <person name="Madpu R."/>
            <person name="Daugherty S.C."/>
            <person name="Durkin A.S."/>
            <person name="Haft D.H."/>
            <person name="Nelson W.C."/>
            <person name="Peterson J.D."/>
            <person name="Pop M."/>
            <person name="Khouri H.M."/>
            <person name="Radune D."/>
            <person name="Benton J.L."/>
            <person name="Mahamoud Y."/>
            <person name="Jiang L."/>
            <person name="Hance I.R."/>
            <person name="Weidman J.F."/>
            <person name="Berry K.J."/>
            <person name="Plaut R.D."/>
            <person name="Wolf A.M."/>
            <person name="Watkins K.L."/>
            <person name="Nierman W.C."/>
            <person name="Hazen A."/>
            <person name="Cline R.T."/>
            <person name="Redmond C."/>
            <person name="Thwaite J.E."/>
            <person name="White O."/>
            <person name="Salzberg S.L."/>
            <person name="Thomason B."/>
            <person name="Friedlander A.M."/>
            <person name="Koehler T.M."/>
            <person name="Hanna P.C."/>
            <person name="Kolstoe A.-B."/>
            <person name="Fraser C.M."/>
        </authorList>
    </citation>
    <scope>NUCLEOTIDE SEQUENCE [LARGE SCALE GENOMIC DNA]</scope>
    <source>
        <strain>Ames / isolate Porton</strain>
    </source>
</reference>
<reference key="2">
    <citation type="submission" date="2004-01" db="EMBL/GenBank/DDBJ databases">
        <title>Complete genome sequence of Bacillus anthracis Sterne.</title>
        <authorList>
            <person name="Brettin T.S."/>
            <person name="Bruce D."/>
            <person name="Challacombe J.F."/>
            <person name="Gilna P."/>
            <person name="Han C."/>
            <person name="Hill K."/>
            <person name="Hitchcock P."/>
            <person name="Jackson P."/>
            <person name="Keim P."/>
            <person name="Longmire J."/>
            <person name="Lucas S."/>
            <person name="Okinaka R."/>
            <person name="Richardson P."/>
            <person name="Rubin E."/>
            <person name="Tice H."/>
        </authorList>
    </citation>
    <scope>NUCLEOTIDE SEQUENCE [LARGE SCALE GENOMIC DNA]</scope>
    <source>
        <strain>Sterne</strain>
    </source>
</reference>
<reference key="3">
    <citation type="journal article" date="2009" name="J. Bacteriol.">
        <title>The complete genome sequence of Bacillus anthracis Ames 'Ancestor'.</title>
        <authorList>
            <person name="Ravel J."/>
            <person name="Jiang L."/>
            <person name="Stanley S.T."/>
            <person name="Wilson M.R."/>
            <person name="Decker R.S."/>
            <person name="Read T.D."/>
            <person name="Worsham P."/>
            <person name="Keim P.S."/>
            <person name="Salzberg S.L."/>
            <person name="Fraser-Liggett C.M."/>
            <person name="Rasko D.A."/>
        </authorList>
    </citation>
    <scope>NUCLEOTIDE SEQUENCE [LARGE SCALE GENOMIC DNA]</scope>
    <source>
        <strain>Ames ancestor</strain>
    </source>
</reference>
<gene>
    <name evidence="1" type="primary">whiA</name>
    <name type="ordered locus">BA_5382</name>
    <name type="ordered locus">GBAA_5382</name>
    <name type="ordered locus">BAS5002</name>
</gene>
<protein>
    <recommendedName>
        <fullName evidence="1">Probable cell division protein WhiA</fullName>
    </recommendedName>
</protein>
<name>WHIA_BACAN</name>
<evidence type="ECO:0000255" key="1">
    <source>
        <dbReference type="HAMAP-Rule" id="MF_01420"/>
    </source>
</evidence>
<keyword id="KW-0131">Cell cycle</keyword>
<keyword id="KW-0132">Cell division</keyword>
<keyword id="KW-0238">DNA-binding</keyword>
<keyword id="KW-1185">Reference proteome</keyword>
<accession>Q81X61</accession>
<accession>Q6HQZ7</accession>
<accession>Q6KKB6</accession>
<organism>
    <name type="scientific">Bacillus anthracis</name>
    <dbReference type="NCBI Taxonomy" id="1392"/>
    <lineage>
        <taxon>Bacteria</taxon>
        <taxon>Bacillati</taxon>
        <taxon>Bacillota</taxon>
        <taxon>Bacilli</taxon>
        <taxon>Bacillales</taxon>
        <taxon>Bacillaceae</taxon>
        <taxon>Bacillus</taxon>
        <taxon>Bacillus cereus group</taxon>
    </lineage>
</organism>
<comment type="function">
    <text evidence="1">Involved in cell division and chromosome segregation.</text>
</comment>
<comment type="similarity">
    <text evidence="1">Belongs to the WhiA family.</text>
</comment>
<feature type="chain" id="PRO_0000376428" description="Probable cell division protein WhiA">
    <location>
        <begin position="1"/>
        <end position="316"/>
    </location>
</feature>
<feature type="DNA-binding region" description="H-T-H motif" evidence="1">
    <location>
        <begin position="275"/>
        <end position="309"/>
    </location>
</feature>
<dbReference type="EMBL" id="AE016879">
    <property type="protein sequence ID" value="AAP29041.1"/>
    <property type="molecule type" value="Genomic_DNA"/>
</dbReference>
<dbReference type="EMBL" id="AE017334">
    <property type="protein sequence ID" value="AAT34516.1"/>
    <property type="molecule type" value="Genomic_DNA"/>
</dbReference>
<dbReference type="EMBL" id="AE017225">
    <property type="protein sequence ID" value="AAT57291.1"/>
    <property type="molecule type" value="Genomic_DNA"/>
</dbReference>
<dbReference type="RefSeq" id="NP_847555.1">
    <property type="nucleotide sequence ID" value="NC_003997.3"/>
</dbReference>
<dbReference type="RefSeq" id="WP_000006561.1">
    <property type="nucleotide sequence ID" value="NZ_WXXJ01000012.1"/>
</dbReference>
<dbReference type="RefSeq" id="YP_031241.1">
    <property type="nucleotide sequence ID" value="NC_005945.1"/>
</dbReference>
<dbReference type="SMR" id="Q81X61"/>
<dbReference type="IntAct" id="Q81X61">
    <property type="interactions" value="1"/>
</dbReference>
<dbReference type="STRING" id="261594.GBAA_5382"/>
<dbReference type="DNASU" id="1084926"/>
<dbReference type="GeneID" id="75088327"/>
<dbReference type="KEGG" id="ban:BA_5382"/>
<dbReference type="KEGG" id="bar:GBAA_5382"/>
<dbReference type="KEGG" id="bat:BAS5002"/>
<dbReference type="PATRIC" id="fig|198094.11.peg.5340"/>
<dbReference type="eggNOG" id="COG1481">
    <property type="taxonomic scope" value="Bacteria"/>
</dbReference>
<dbReference type="HOGENOM" id="CLU_053282_0_0_9"/>
<dbReference type="OMA" id="CDAEAAW"/>
<dbReference type="OrthoDB" id="401278at2"/>
<dbReference type="Proteomes" id="UP000000427">
    <property type="component" value="Chromosome"/>
</dbReference>
<dbReference type="Proteomes" id="UP000000594">
    <property type="component" value="Chromosome"/>
</dbReference>
<dbReference type="GO" id="GO:0003677">
    <property type="term" value="F:DNA binding"/>
    <property type="evidence" value="ECO:0007669"/>
    <property type="project" value="UniProtKB-UniRule"/>
</dbReference>
<dbReference type="GO" id="GO:0051301">
    <property type="term" value="P:cell division"/>
    <property type="evidence" value="ECO:0007669"/>
    <property type="project" value="UniProtKB-UniRule"/>
</dbReference>
<dbReference type="GO" id="GO:0043937">
    <property type="term" value="P:regulation of sporulation"/>
    <property type="evidence" value="ECO:0007669"/>
    <property type="project" value="InterPro"/>
</dbReference>
<dbReference type="FunFam" id="3.10.28.10:FF:000002">
    <property type="entry name" value="Probable cell division protein WhiA"/>
    <property type="match status" value="1"/>
</dbReference>
<dbReference type="Gene3D" id="3.10.28.10">
    <property type="entry name" value="Homing endonucleases"/>
    <property type="match status" value="1"/>
</dbReference>
<dbReference type="HAMAP" id="MF_01420">
    <property type="entry name" value="HTH_type_WhiA"/>
    <property type="match status" value="1"/>
</dbReference>
<dbReference type="InterPro" id="IPR027434">
    <property type="entry name" value="Homing_endonucl"/>
</dbReference>
<dbReference type="InterPro" id="IPR018478">
    <property type="entry name" value="Sporu_reg_WhiA_N_dom"/>
</dbReference>
<dbReference type="InterPro" id="IPR003802">
    <property type="entry name" value="Sporulation_regulator_WhiA"/>
</dbReference>
<dbReference type="InterPro" id="IPR023054">
    <property type="entry name" value="Sporulation_regulator_WhiA_C"/>
</dbReference>
<dbReference type="InterPro" id="IPR039518">
    <property type="entry name" value="WhiA_LAGLIDADG_dom"/>
</dbReference>
<dbReference type="NCBIfam" id="TIGR00647">
    <property type="entry name" value="DNA_bind_WhiA"/>
    <property type="match status" value="1"/>
</dbReference>
<dbReference type="PANTHER" id="PTHR37307">
    <property type="entry name" value="CELL DIVISION PROTEIN WHIA-RELATED"/>
    <property type="match status" value="1"/>
</dbReference>
<dbReference type="PANTHER" id="PTHR37307:SF1">
    <property type="entry name" value="CELL DIVISION PROTEIN WHIA-RELATED"/>
    <property type="match status" value="1"/>
</dbReference>
<dbReference type="Pfam" id="PF02650">
    <property type="entry name" value="HTH_WhiA"/>
    <property type="match status" value="1"/>
</dbReference>
<dbReference type="Pfam" id="PF14527">
    <property type="entry name" value="LAGLIDADG_WhiA"/>
    <property type="match status" value="1"/>
</dbReference>
<dbReference type="Pfam" id="PF10298">
    <property type="entry name" value="WhiA_N"/>
    <property type="match status" value="1"/>
</dbReference>
<dbReference type="SUPFAM" id="SSF55608">
    <property type="entry name" value="Homing endonucleases"/>
    <property type="match status" value="1"/>
</dbReference>